<comment type="function">
    <molecule>Alpha-conotoxin TxIB</molecule>
    <text evidence="2 4">Alpha-conotoxins act on postsynaptic membranes, they bind to the nicotinic acetylcholine receptors (nAChR) and thus inhibit them. This conotoxin is a subtype-specific blocker of alpha-6/alpha-3-beta-2-beta-3 (CHRNA6/CHRNA3-CHRNB2-CHRNB3) nAChRs nicotinic acetylcholine receptors (nAChRs) (IC(50)=28.4 nM).</text>
</comment>
<comment type="subcellular location">
    <subcellularLocation>
        <location evidence="7">Secreted</location>
    </subcellularLocation>
</comment>
<comment type="tissue specificity">
    <text evidence="7">Expressed by the venom duct.</text>
</comment>
<comment type="domain">
    <text evidence="6">The cysteine framework is I (CC-C-C). Alpha4/7 pattern.</text>
</comment>
<comment type="miscellaneous">
    <text evidence="2">Negative results: does not affect the following neuronal AChR: alpha-6/alpha-3 beta-4 (CHRNA6/CHRNA3 CHRNB4), rat alpha-7 (CHRNA7), alpha-9 alpha-10 (CHRNA9 CHRNA10), alpha-2 beta-2 (CHRNA2 CHRNB2), alpha-2 beta-4 (CHRNA2 CHRNB4), alpha-3 beta-2 (CHRNA3 CHRNB2), alpha-3 beta-4 (CHRNA3 CHRNB4), alpha-4 beta-2 (CHRNA4 CHRNB2), alpha-4 beta-4 (CHRNA4 CHRNB4), nor the muscle receptor alpha-1 beta-1 delta epsilon (CHRNA1 CHRNB1 CHRNE CHRND).</text>
</comment>
<comment type="similarity">
    <text evidence="6">Belongs to the conotoxin A superfamily.</text>
</comment>
<keyword id="KW-0002">3D-structure</keyword>
<keyword id="KW-0008">Acetylcholine receptor inhibiting toxin</keyword>
<keyword id="KW-0027">Amidation</keyword>
<keyword id="KW-1015">Disulfide bond</keyword>
<keyword id="KW-0528">Neurotoxin</keyword>
<keyword id="KW-0629">Postsynaptic neurotoxin</keyword>
<keyword id="KW-0964">Secreted</keyword>
<keyword id="KW-0800">Toxin</keyword>
<reference key="1">
    <citation type="journal article" date="2013" name="J. Biol. Chem.">
        <title>Characterization of a novel alpha-conotoxin from conus textile that selectively targets alpha6/alpha3beta2beta3 nicotinic acetylcholine receptors.</title>
        <authorList>
            <person name="Luo S."/>
            <person name="Zhangsun D."/>
            <person name="Wu Y."/>
            <person name="Zhu X."/>
            <person name="Hu Y."/>
            <person name="McIntyre M."/>
            <person name="Christensen S."/>
            <person name="Akcan M."/>
            <person name="Craik D.J."/>
            <person name="McIntosh J.M."/>
        </authorList>
    </citation>
    <scope>NUCLEOTIDE SEQUENCE [GENOMIC DNA]</scope>
    <scope>FUNCTION</scope>
    <scope>SYNTHESIS OF 22-37</scope>
    <scope>AMIDATION AT CYS-37</scope>
    <scope>STRUCTURE BY NMR 22-37</scope>
    <scope>DISULFIDE BONDS</scope>
    <scope>MUTAGENESIS OF CYS-37</scope>
</reference>
<reference key="2">
    <citation type="journal article" date="2018" name="Neuropharmacology">
        <title>Species specificity of rat and human alpha7 nicotinic acetylcholine receptors towards different classes of peptide and protein antagonists.</title>
        <authorList>
            <person name="Yu J."/>
            <person name="Zhu X."/>
            <person name="Zhang L."/>
            <person name="Kudryavtsev D."/>
            <person name="Kasheverov I."/>
            <person name="Lei Y."/>
            <person name="Zhangsun D."/>
            <person name="Tsetlin V."/>
            <person name="Luo S."/>
        </authorList>
    </citation>
    <scope>MUTAGENESIS OF LYS-32</scope>
    <scope>3D-STRUCTURE MODELING OF MUTANT</scope>
</reference>
<reference key="3">
    <citation type="journal article" date="2020" name="Mar. Drugs">
        <title>Effects of cyclization on activity and stability of alpha-conotoxin TxIB.</title>
        <authorList>
            <person name="Li X."/>
            <person name="Wang S."/>
            <person name="Zhu X."/>
            <person name="Zhangsun D."/>
            <person name="Wu Y."/>
            <person name="Luo S."/>
        </authorList>
    </citation>
    <scope>FUNCTION</scope>
    <scope>SYNTHESIS OF CYCLIC PEPTIDE</scope>
    <scope>MUTAGENESIS OF CYS-37</scope>
</reference>
<feature type="propeptide" id="PRO_0000425962" evidence="7">
    <location>
        <begin position="1"/>
        <end position="20"/>
    </location>
</feature>
<feature type="peptide" id="PRO_0000425964" description="Alpha-conotoxin TxIB" evidence="7">
    <location>
        <begin position="22"/>
        <end position="37"/>
    </location>
</feature>
<feature type="propeptide" id="PRO_0000425965" evidence="7">
    <location>
        <begin position="39"/>
        <end position="41"/>
    </location>
</feature>
<feature type="region of interest" description="Ser-Xaa-Pro motif, crucial for potent interaction with nAChR" evidence="1">
    <location>
        <begin position="25"/>
        <end position="27"/>
    </location>
</feature>
<feature type="modified residue" description="Cysteine amide; in Alpha-conotoxin TxIB" evidence="7">
    <location>
        <position position="37"/>
    </location>
</feature>
<feature type="disulfide bond" evidence="7">
    <location>
        <begin position="23"/>
        <end position="29"/>
    </location>
</feature>
<feature type="disulfide bond" evidence="7">
    <location>
        <begin position="24"/>
        <end position="37"/>
    </location>
</feature>
<feature type="mutagenesis site" description="Increase in inhibition potency of rat alpha-7/CHRNA7 nAChR. Does not show activity on human alpha-7/CHRNA7 nAChR." evidence="3">
    <original>K</original>
    <variation>A</variation>
    <location>
        <position position="32"/>
    </location>
</feature>
<feature type="mutagenesis site" description="Amidated TxIB(G); 9-fold decrease in activity on alpha-6/alpha-3-beta-2-beta-3 nAChRs." evidence="2">
    <original>C</original>
    <variation>CG</variation>
    <location>
        <position position="37"/>
    </location>
</feature>
<feature type="mutagenesis site" description="Cyclic cTxIB-4; no change in activity and potency." evidence="4">
    <original>C</original>
    <variation>CGAAG</variation>
    <location>
        <position position="37"/>
    </location>
</feature>
<feature type="mutagenesis site" description="Cyclic cTxIB-6; no change in activity and potency." evidence="4">
    <original>C</original>
    <variation>CGAGAAG</variation>
    <location>
        <position position="37"/>
    </location>
</feature>
<feature type="mutagenesis site" description="Cyclic cTxIB-5; no change in activity and potency." evidence="4">
    <original>C</original>
    <variation>CGGAAG</variation>
    <location>
        <position position="37"/>
    </location>
</feature>
<feature type="mutagenesis site" description="Cyclic cTxIB-7; no change in activity and potency." evidence="4">
    <original>C</original>
    <variation>CGGAAGAG</variation>
    <location>
        <position position="37"/>
    </location>
</feature>
<feature type="non-terminal residue">
    <location>
        <position position="1"/>
    </location>
</feature>
<feature type="helix" evidence="8">
    <location>
        <begin position="23"/>
        <end position="25"/>
    </location>
</feature>
<feature type="helix" evidence="8">
    <location>
        <begin position="27"/>
        <end position="29"/>
    </location>
</feature>
<feature type="turn" evidence="8">
    <location>
        <begin position="30"/>
        <end position="32"/>
    </location>
</feature>
<feature type="turn" evidence="8">
    <location>
        <begin position="34"/>
        <end position="36"/>
    </location>
</feature>
<name>CA1B_CONTE</name>
<accession>K4RNX9</accession>
<accession>L7MTK0</accession>
<proteinExistence type="inferred from homology"/>
<dbReference type="EMBL" id="HE995411">
    <property type="protein sequence ID" value="CCM73829.1"/>
    <property type="molecule type" value="Genomic_DNA"/>
</dbReference>
<dbReference type="PDB" id="2LZ5">
    <property type="method" value="NMR"/>
    <property type="chains" value="A=22-37"/>
</dbReference>
<dbReference type="PDBsum" id="2LZ5"/>
<dbReference type="BMRB" id="K4RNX9"/>
<dbReference type="SMR" id="K4RNX9"/>
<dbReference type="EvolutionaryTrace" id="K4RNX9"/>
<dbReference type="GO" id="GO:0005576">
    <property type="term" value="C:extracellular region"/>
    <property type="evidence" value="ECO:0007669"/>
    <property type="project" value="UniProtKB-SubCell"/>
</dbReference>
<dbReference type="GO" id="GO:0035792">
    <property type="term" value="C:host cell postsynaptic membrane"/>
    <property type="evidence" value="ECO:0007669"/>
    <property type="project" value="UniProtKB-KW"/>
</dbReference>
<dbReference type="GO" id="GO:0030550">
    <property type="term" value="F:acetylcholine receptor inhibitor activity"/>
    <property type="evidence" value="ECO:0007669"/>
    <property type="project" value="UniProtKB-KW"/>
</dbReference>
<dbReference type="GO" id="GO:0090729">
    <property type="term" value="F:toxin activity"/>
    <property type="evidence" value="ECO:0007669"/>
    <property type="project" value="UniProtKB-KW"/>
</dbReference>
<dbReference type="InterPro" id="IPR009958">
    <property type="entry name" value="Conotoxin_a-typ"/>
</dbReference>
<dbReference type="InterPro" id="IPR018072">
    <property type="entry name" value="Conotoxin_a-typ_CS"/>
</dbReference>
<dbReference type="Pfam" id="PF07365">
    <property type="entry name" value="Toxin_8"/>
    <property type="match status" value="1"/>
</dbReference>
<dbReference type="PROSITE" id="PS60014">
    <property type="entry name" value="ALPHA_CONOTOXIN"/>
    <property type="match status" value="1"/>
</dbReference>
<protein>
    <recommendedName>
        <fullName evidence="5">Alpha-conotoxin TxIB</fullName>
    </recommendedName>
</protein>
<evidence type="ECO:0000250" key="1">
    <source>
        <dbReference type="UniProtKB" id="P56636"/>
    </source>
</evidence>
<evidence type="ECO:0000269" key="2">
    <source>
    </source>
</evidence>
<evidence type="ECO:0000269" key="3">
    <source>
    </source>
</evidence>
<evidence type="ECO:0000269" key="4">
    <source>
    </source>
</evidence>
<evidence type="ECO:0000303" key="5">
    <source>
    </source>
</evidence>
<evidence type="ECO:0000305" key="6"/>
<evidence type="ECO:0000305" key="7">
    <source>
    </source>
</evidence>
<evidence type="ECO:0007829" key="8">
    <source>
        <dbReference type="PDB" id="2LZ5"/>
    </source>
</evidence>
<sequence>FDGRNTSANNKATDLMALPVRGCCSDPPCRNKHPDLCGGRR</sequence>
<organism>
    <name type="scientific">Conus textile</name>
    <name type="common">Cloth-of-gold cone</name>
    <dbReference type="NCBI Taxonomy" id="6494"/>
    <lineage>
        <taxon>Eukaryota</taxon>
        <taxon>Metazoa</taxon>
        <taxon>Spiralia</taxon>
        <taxon>Lophotrochozoa</taxon>
        <taxon>Mollusca</taxon>
        <taxon>Gastropoda</taxon>
        <taxon>Caenogastropoda</taxon>
        <taxon>Neogastropoda</taxon>
        <taxon>Conoidea</taxon>
        <taxon>Conidae</taxon>
        <taxon>Conus</taxon>
        <taxon>Cylinder</taxon>
    </lineage>
</organism>